<reference key="1">
    <citation type="submission" date="2008-06" db="EMBL/GenBank/DDBJ databases">
        <title>Complete sequence of Chloroherpeton thalassium ATCC 35110.</title>
        <authorList>
            <consortium name="US DOE Joint Genome Institute"/>
            <person name="Lucas S."/>
            <person name="Copeland A."/>
            <person name="Lapidus A."/>
            <person name="Glavina del Rio T."/>
            <person name="Dalin E."/>
            <person name="Tice H."/>
            <person name="Bruce D."/>
            <person name="Goodwin L."/>
            <person name="Pitluck S."/>
            <person name="Schmutz J."/>
            <person name="Larimer F."/>
            <person name="Land M."/>
            <person name="Hauser L."/>
            <person name="Kyrpides N."/>
            <person name="Mikhailova N."/>
            <person name="Liu Z."/>
            <person name="Li T."/>
            <person name="Zhao F."/>
            <person name="Overmann J."/>
            <person name="Bryant D.A."/>
            <person name="Richardson P."/>
        </authorList>
    </citation>
    <scope>NUCLEOTIDE SEQUENCE [LARGE SCALE GENOMIC DNA]</scope>
    <source>
        <strain>ATCC 35110 / GB-78</strain>
    </source>
</reference>
<name>RS16_CHLT3</name>
<proteinExistence type="inferred from homology"/>
<protein>
    <recommendedName>
        <fullName evidence="1">Small ribosomal subunit protein bS16</fullName>
    </recommendedName>
    <alternativeName>
        <fullName evidence="3">30S ribosomal protein S16</fullName>
    </alternativeName>
</protein>
<evidence type="ECO:0000255" key="1">
    <source>
        <dbReference type="HAMAP-Rule" id="MF_00385"/>
    </source>
</evidence>
<evidence type="ECO:0000256" key="2">
    <source>
        <dbReference type="SAM" id="MobiDB-lite"/>
    </source>
</evidence>
<evidence type="ECO:0000305" key="3"/>
<dbReference type="EMBL" id="CP001100">
    <property type="protein sequence ID" value="ACF14913.1"/>
    <property type="molecule type" value="Genomic_DNA"/>
</dbReference>
<dbReference type="RefSeq" id="WP_012500995.1">
    <property type="nucleotide sequence ID" value="NC_011026.1"/>
</dbReference>
<dbReference type="SMR" id="B3QXJ8"/>
<dbReference type="STRING" id="517418.Ctha_2464"/>
<dbReference type="KEGG" id="cts:Ctha_2464"/>
<dbReference type="eggNOG" id="COG0228">
    <property type="taxonomic scope" value="Bacteria"/>
</dbReference>
<dbReference type="HOGENOM" id="CLU_100590_3_2_10"/>
<dbReference type="OrthoDB" id="9807878at2"/>
<dbReference type="Proteomes" id="UP000001208">
    <property type="component" value="Chromosome"/>
</dbReference>
<dbReference type="GO" id="GO:0005737">
    <property type="term" value="C:cytoplasm"/>
    <property type="evidence" value="ECO:0007669"/>
    <property type="project" value="UniProtKB-ARBA"/>
</dbReference>
<dbReference type="GO" id="GO:0015935">
    <property type="term" value="C:small ribosomal subunit"/>
    <property type="evidence" value="ECO:0007669"/>
    <property type="project" value="TreeGrafter"/>
</dbReference>
<dbReference type="GO" id="GO:0003735">
    <property type="term" value="F:structural constituent of ribosome"/>
    <property type="evidence" value="ECO:0007669"/>
    <property type="project" value="InterPro"/>
</dbReference>
<dbReference type="GO" id="GO:0006412">
    <property type="term" value="P:translation"/>
    <property type="evidence" value="ECO:0007669"/>
    <property type="project" value="UniProtKB-UniRule"/>
</dbReference>
<dbReference type="Gene3D" id="3.30.1320.10">
    <property type="match status" value="1"/>
</dbReference>
<dbReference type="HAMAP" id="MF_00385">
    <property type="entry name" value="Ribosomal_bS16"/>
    <property type="match status" value="1"/>
</dbReference>
<dbReference type="InterPro" id="IPR000307">
    <property type="entry name" value="Ribosomal_bS16"/>
</dbReference>
<dbReference type="InterPro" id="IPR023803">
    <property type="entry name" value="Ribosomal_bS16_dom_sf"/>
</dbReference>
<dbReference type="NCBIfam" id="TIGR00002">
    <property type="entry name" value="S16"/>
    <property type="match status" value="1"/>
</dbReference>
<dbReference type="PANTHER" id="PTHR12919">
    <property type="entry name" value="30S RIBOSOMAL PROTEIN S16"/>
    <property type="match status" value="1"/>
</dbReference>
<dbReference type="PANTHER" id="PTHR12919:SF20">
    <property type="entry name" value="SMALL RIBOSOMAL SUBUNIT PROTEIN BS16M"/>
    <property type="match status" value="1"/>
</dbReference>
<dbReference type="Pfam" id="PF00886">
    <property type="entry name" value="Ribosomal_S16"/>
    <property type="match status" value="1"/>
</dbReference>
<dbReference type="SUPFAM" id="SSF54565">
    <property type="entry name" value="Ribosomal protein S16"/>
    <property type="match status" value="1"/>
</dbReference>
<feature type="chain" id="PRO_1000196367" description="Small ribosomal subunit protein bS16">
    <location>
        <begin position="1"/>
        <end position="135"/>
    </location>
</feature>
<feature type="region of interest" description="Disordered" evidence="2">
    <location>
        <begin position="94"/>
        <end position="135"/>
    </location>
</feature>
<feature type="compositionally biased region" description="Basic and acidic residues" evidence="2">
    <location>
        <begin position="105"/>
        <end position="116"/>
    </location>
</feature>
<feature type="compositionally biased region" description="Basic and acidic residues" evidence="2">
    <location>
        <begin position="124"/>
        <end position="135"/>
    </location>
</feature>
<keyword id="KW-1185">Reference proteome</keyword>
<keyword id="KW-0687">Ribonucleoprotein</keyword>
<keyword id="KW-0689">Ribosomal protein</keyword>
<accession>B3QXJ8</accession>
<gene>
    <name evidence="1" type="primary">rpsP</name>
    <name type="ordered locus">Ctha_2464</name>
</gene>
<organism>
    <name type="scientific">Chloroherpeton thalassium (strain ATCC 35110 / GB-78)</name>
    <dbReference type="NCBI Taxonomy" id="517418"/>
    <lineage>
        <taxon>Bacteria</taxon>
        <taxon>Pseudomonadati</taxon>
        <taxon>Chlorobiota</taxon>
        <taxon>Chlorobiia</taxon>
        <taxon>Chlorobiales</taxon>
        <taxon>Chloroherpetonaceae</taxon>
        <taxon>Chloroherpeton</taxon>
    </lineage>
</organism>
<comment type="similarity">
    <text evidence="1">Belongs to the bacterial ribosomal protein bS16 family.</text>
</comment>
<sequence length="135" mass="16048">MVKIRLRRIGRKKLPIYQIVAADARARRDGRFLEVLGRYEPTRKPHQLTFNRERLMYWLSVGAQPTDTAKALIRRTGMLYENYMRIKGKSEEEIGTEMETWQQRNDSRLKRGLDRKAIRRKRKKEAEAKEKESAG</sequence>